<sequence length="684" mass="78836">MDTSKKDTTRSPSHSNSSSPSSSSLSSSSSKEKKRPKRLSSQNVNYDLKRRKIITSEGIERSFKNEHSNLAVEDNIPEEEPKELLEKDSKGNIIKLNEPSTISEDSKVSVTGLPLNKGPSEKIKRESLWNYRKNLGGQSNNSEMTLVPSKRFTQVPKNFQDLNRNDLKTFLTENMTEESNIRSTIGWNGDIINRTRDREPESDRDNKKLSNIRTKIILSTNATYDSKSKLFGQNSIKSTSNASEKIFRDKNNSTIDFENEDFCSACNQSGSFLCCDTCPKSFHFLCLDPPIDPNNLPKGDWHCNECKFKIFINNSMATLKKIESNFIKQNNNVKIFAKLLFNIDSHNPKQFQLPNYIKETFPAVKTGSRGQYSDENDKIPLTDRQLFNTSYGQSITKLDSYNPDTHIDSNSGKFLICYKCNQTRLGSWSHPENSRLIMTCDYCQTPWHLDCVPRASFKNLGSKWKCPLHSPTKVYKKIHHCQEDNSVNYKVWKKQRLINKKNQLYYEPLQKIGYQNNGNIQIIPTTSHTDYDFNQDFKITQIDENSIKYDFFDKIYKSKMVQKRKLFQFQESLIDKLVSNGSQNGNSEDNMVKDIASLIYFQVSNNDKSSNNKSASKSNNLRKLWDLKELTNVVVPNELDSIQFNDFSSDEIKHLLYLKKIIESKPKEELLKFLNIENPENQSE</sequence>
<keyword id="KW-0002">3D-structure</keyword>
<keyword id="KW-0007">Acetylation</keyword>
<keyword id="KW-0156">Chromatin regulator</keyword>
<keyword id="KW-0479">Metal-binding</keyword>
<keyword id="KW-0539">Nucleus</keyword>
<keyword id="KW-0597">Phosphoprotein</keyword>
<keyword id="KW-1185">Reference proteome</keyword>
<keyword id="KW-0677">Repeat</keyword>
<keyword id="KW-0678">Repressor</keyword>
<keyword id="KW-0804">Transcription</keyword>
<keyword id="KW-0805">Transcription regulation</keyword>
<keyword id="KW-0862">Zinc</keyword>
<keyword id="KW-0863">Zinc-finger</keyword>
<comment type="function">
    <text evidence="5">Catalytic component of the RPD3C(S) histone deacetylase complex responsible for the deacetylation of lysine residues on the N-terminal part of the core histones (H2A, H2B, H3 and H4). Histone deacetylation gives a tag for epigenetic repression and plays an important role in transcriptional regulation, cell cycle progression, DNA damage response, osmotic stress response and developmental events.</text>
</comment>
<comment type="subunit">
    <text evidence="5">Component of the RPD3C(S) complex composed of at least EAF3, RCO1, RPD3, SIN3, and UME1.</text>
</comment>
<comment type="subcellular location">
    <subcellularLocation>
        <location evidence="3">Nucleus</location>
    </subcellularLocation>
</comment>
<comment type="miscellaneous">
    <text evidence="4">Present with 486 molecules/cell in log phase SD medium.</text>
</comment>
<reference key="1">
    <citation type="journal article" date="1997" name="Nature">
        <title>The nucleotide sequence of Saccharomyces cerevisiae chromosome XIII.</title>
        <authorList>
            <person name="Bowman S."/>
            <person name="Churcher C.M."/>
            <person name="Badcock K."/>
            <person name="Brown D."/>
            <person name="Chillingworth T."/>
            <person name="Connor R."/>
            <person name="Dedman K."/>
            <person name="Devlin K."/>
            <person name="Gentles S."/>
            <person name="Hamlin N."/>
            <person name="Hunt S."/>
            <person name="Jagels K."/>
            <person name="Lye G."/>
            <person name="Moule S."/>
            <person name="Odell C."/>
            <person name="Pearson D."/>
            <person name="Rajandream M.A."/>
            <person name="Rice P."/>
            <person name="Skelton J."/>
            <person name="Walsh S.V."/>
            <person name="Whitehead S."/>
            <person name="Barrell B.G."/>
        </authorList>
    </citation>
    <scope>NUCLEOTIDE SEQUENCE [LARGE SCALE GENOMIC DNA]</scope>
    <source>
        <strain>ATCC 204508 / S288c</strain>
    </source>
</reference>
<reference key="2">
    <citation type="journal article" date="2014" name="G3 (Bethesda)">
        <title>The reference genome sequence of Saccharomyces cerevisiae: Then and now.</title>
        <authorList>
            <person name="Engel S.R."/>
            <person name="Dietrich F.S."/>
            <person name="Fisk D.G."/>
            <person name="Binkley G."/>
            <person name="Balakrishnan R."/>
            <person name="Costanzo M.C."/>
            <person name="Dwight S.S."/>
            <person name="Hitz B.C."/>
            <person name="Karra K."/>
            <person name="Nash R.S."/>
            <person name="Weng S."/>
            <person name="Wong E.D."/>
            <person name="Lloyd P."/>
            <person name="Skrzypek M.S."/>
            <person name="Miyasato S.R."/>
            <person name="Simison M."/>
            <person name="Cherry J.M."/>
        </authorList>
    </citation>
    <scope>GENOME REANNOTATION</scope>
    <source>
        <strain>ATCC 204508 / S288c</strain>
    </source>
</reference>
<reference key="3">
    <citation type="journal article" date="2003" name="Nature">
        <title>Global analysis of protein localization in budding yeast.</title>
        <authorList>
            <person name="Huh W.-K."/>
            <person name="Falvo J.V."/>
            <person name="Gerke L.C."/>
            <person name="Carroll A.S."/>
            <person name="Howson R.W."/>
            <person name="Weissman J.S."/>
            <person name="O'Shea E.K."/>
        </authorList>
    </citation>
    <scope>SUBCELLULAR LOCATION [LARGE SCALE ANALYSIS]</scope>
</reference>
<reference key="4">
    <citation type="journal article" date="2003" name="Nature">
        <title>Global analysis of protein expression in yeast.</title>
        <authorList>
            <person name="Ghaemmaghami S."/>
            <person name="Huh W.-K."/>
            <person name="Bower K."/>
            <person name="Howson R.W."/>
            <person name="Belle A."/>
            <person name="Dephoure N."/>
            <person name="O'Shea E.K."/>
            <person name="Weissman J.S."/>
        </authorList>
    </citation>
    <scope>LEVEL OF PROTEIN EXPRESSION [LARGE SCALE ANALYSIS]</scope>
</reference>
<reference key="5">
    <citation type="journal article" date="2005" name="Cell">
        <title>Cotranscriptional set2 methylation of histone H3 lysine 36 recruits a repressive Rpd3 complex.</title>
        <authorList>
            <person name="Keogh M.-C."/>
            <person name="Kurdistani S.K."/>
            <person name="Morris S.A."/>
            <person name="Ahn S.H."/>
            <person name="Podolny V."/>
            <person name="Collins S.R."/>
            <person name="Schuldiner M."/>
            <person name="Chin K."/>
            <person name="Punna T."/>
            <person name="Thompson N.J."/>
            <person name="Boone C."/>
            <person name="Emili A."/>
            <person name="Weissman J.S."/>
            <person name="Hughes T.R."/>
            <person name="Strahl B.D."/>
            <person name="Grunstein M."/>
            <person name="Greenblatt J.F."/>
            <person name="Buratowski S."/>
            <person name="Krogan N.J."/>
        </authorList>
    </citation>
    <scope>IDENTIFICATION IN THE RPD3C(S) COMPLEX</scope>
    <scope>IDENTIFICATION BY MASS SPECTROMETRY</scope>
    <scope>FUNCTION OF THE RPD3C(S) COMPLEX</scope>
</reference>
<reference key="6">
    <citation type="journal article" date="2008" name="Mol. Cell. Proteomics">
        <title>A multidimensional chromatography technology for in-depth phosphoproteome analysis.</title>
        <authorList>
            <person name="Albuquerque C.P."/>
            <person name="Smolka M.B."/>
            <person name="Payne S.H."/>
            <person name="Bafna V."/>
            <person name="Eng J."/>
            <person name="Zhou H."/>
        </authorList>
    </citation>
    <scope>PHOSPHORYLATION [LARGE SCALE ANALYSIS] AT SER-68 AND SER-683</scope>
    <scope>IDENTIFICATION BY MASS SPECTROMETRY [LARGE SCALE ANALYSIS]</scope>
</reference>
<reference key="7">
    <citation type="journal article" date="2009" name="Science">
        <title>Global analysis of Cdk1 substrate phosphorylation sites provides insights into evolution.</title>
        <authorList>
            <person name="Holt L.J."/>
            <person name="Tuch B.B."/>
            <person name="Villen J."/>
            <person name="Johnson A.D."/>
            <person name="Gygi S.P."/>
            <person name="Morgan D.O."/>
        </authorList>
    </citation>
    <scope>PHOSPHORYLATION [LARGE SCALE ANALYSIS] AT SER-683</scope>
    <scope>IDENTIFICATION BY MASS SPECTROMETRY [LARGE SCALE ANALYSIS]</scope>
</reference>
<reference key="8">
    <citation type="journal article" date="2012" name="Proc. Natl. Acad. Sci. U.S.A.">
        <title>N-terminal acetylome analyses and functional insights of the N-terminal acetyltransferase NatB.</title>
        <authorList>
            <person name="Van Damme P."/>
            <person name="Lasa M."/>
            <person name="Polevoda B."/>
            <person name="Gazquez C."/>
            <person name="Elosegui-Artola A."/>
            <person name="Kim D.S."/>
            <person name="De Juan-Pardo E."/>
            <person name="Demeyer K."/>
            <person name="Hole K."/>
            <person name="Larrea E."/>
            <person name="Timmerman E."/>
            <person name="Prieto J."/>
            <person name="Arnesen T."/>
            <person name="Sherman F."/>
            <person name="Gevaert K."/>
            <person name="Aldabe R."/>
        </authorList>
    </citation>
    <scope>ACETYLATION [LARGE SCALE ANALYSIS] AT MET-1</scope>
    <scope>IDENTIFICATION BY MASS SPECTROMETRY [LARGE SCALE ANALYSIS]</scope>
</reference>
<protein>
    <recommendedName>
        <fullName>Transcriptional regulatory protein RCO1</fullName>
    </recommendedName>
</protein>
<accession>Q04779</accession>
<accession>D6VZP9</accession>
<proteinExistence type="evidence at protein level"/>
<gene>
    <name type="primary">RCO1</name>
    <name type="ordered locus">YMR075W</name>
    <name type="ORF">YM9916.14</name>
</gene>
<name>RCO1_YEAST</name>
<dbReference type="EMBL" id="Z48952">
    <property type="protein sequence ID" value="CAA88800.1"/>
    <property type="molecule type" value="Genomic_DNA"/>
</dbReference>
<dbReference type="EMBL" id="BK006946">
    <property type="protein sequence ID" value="DAA09973.1"/>
    <property type="molecule type" value="Genomic_DNA"/>
</dbReference>
<dbReference type="PIR" id="S52835">
    <property type="entry name" value="S52835"/>
</dbReference>
<dbReference type="RefSeq" id="NP_013791.1">
    <property type="nucleotide sequence ID" value="NM_001182574.1"/>
</dbReference>
<dbReference type="PDB" id="7YI0">
    <property type="method" value="EM"/>
    <property type="resolution" value="3.20 A"/>
    <property type="chains" value="D/F=1-684"/>
</dbReference>
<dbReference type="PDB" id="7YI2">
    <property type="method" value="EM"/>
    <property type="resolution" value="3.40 A"/>
    <property type="chains" value="D/E=1-684"/>
</dbReference>
<dbReference type="PDB" id="7YI3">
    <property type="method" value="EM"/>
    <property type="resolution" value="3.30 A"/>
    <property type="chains" value="D/E=1-684"/>
</dbReference>
<dbReference type="PDB" id="7YI4">
    <property type="method" value="EM"/>
    <property type="resolution" value="3.96 A"/>
    <property type="chains" value="D/F=1-684"/>
</dbReference>
<dbReference type="PDB" id="7YI5">
    <property type="method" value="EM"/>
    <property type="resolution" value="3.96 A"/>
    <property type="chains" value="D/F=1-684"/>
</dbReference>
<dbReference type="PDB" id="8HXX">
    <property type="method" value="EM"/>
    <property type="resolution" value="3.00 A"/>
    <property type="chains" value="N/P=1-684"/>
</dbReference>
<dbReference type="PDB" id="8HXY">
    <property type="method" value="EM"/>
    <property type="resolution" value="3.10 A"/>
    <property type="chains" value="N/P=1-684"/>
</dbReference>
<dbReference type="PDB" id="8HY0">
    <property type="method" value="EM"/>
    <property type="resolution" value="3.10 A"/>
    <property type="chains" value="N/P=1-684"/>
</dbReference>
<dbReference type="PDB" id="8I3F">
    <property type="method" value="X-ray"/>
    <property type="resolution" value="1.62 A"/>
    <property type="chains" value="B=258-375"/>
</dbReference>
<dbReference type="PDB" id="8IHM">
    <property type="method" value="EM"/>
    <property type="resolution" value="3.58 A"/>
    <property type="chains" value="M=50-67"/>
</dbReference>
<dbReference type="PDB" id="8IHN">
    <property type="method" value="EM"/>
    <property type="resolution" value="3.37 A"/>
    <property type="chains" value="M/O=1-684"/>
</dbReference>
<dbReference type="PDB" id="8IHT">
    <property type="method" value="EM"/>
    <property type="resolution" value="3.72 A"/>
    <property type="chains" value="M/O=1-684"/>
</dbReference>
<dbReference type="PDB" id="8JHO">
    <property type="method" value="EM"/>
    <property type="resolution" value="7.60 A"/>
    <property type="chains" value="N/P=1-684"/>
</dbReference>
<dbReference type="PDB" id="8KC7">
    <property type="method" value="EM"/>
    <property type="resolution" value="3.46 A"/>
    <property type="chains" value="E/G=1-684"/>
</dbReference>
<dbReference type="PDB" id="8KD2">
    <property type="method" value="EM"/>
    <property type="resolution" value="3.02 A"/>
    <property type="chains" value="E/G=1-684"/>
</dbReference>
<dbReference type="PDB" id="8KD3">
    <property type="method" value="EM"/>
    <property type="resolution" value="2.90 A"/>
    <property type="chains" value="E/G=1-684"/>
</dbReference>
<dbReference type="PDB" id="8KD4">
    <property type="method" value="EM"/>
    <property type="resolution" value="2.93 A"/>
    <property type="chains" value="E/G=1-684"/>
</dbReference>
<dbReference type="PDB" id="8KD5">
    <property type="method" value="EM"/>
    <property type="resolution" value="2.90 A"/>
    <property type="chains" value="E/G=1-684"/>
</dbReference>
<dbReference type="PDB" id="8KD6">
    <property type="method" value="EM"/>
    <property type="resolution" value="3.07 A"/>
    <property type="chains" value="E/G=1-684"/>
</dbReference>
<dbReference type="PDB" id="8KD7">
    <property type="method" value="EM"/>
    <property type="resolution" value="3.09 A"/>
    <property type="chains" value="E/G=1-684"/>
</dbReference>
<dbReference type="PDB" id="8TOF">
    <property type="method" value="EM"/>
    <property type="resolution" value="2.80 A"/>
    <property type="chains" value="F/G=1-684"/>
</dbReference>
<dbReference type="PDB" id="8W9C">
    <property type="method" value="EM"/>
    <property type="resolution" value="3.30 A"/>
    <property type="chains" value="E/F=1-684"/>
</dbReference>
<dbReference type="PDB" id="8W9D">
    <property type="method" value="EM"/>
    <property type="resolution" value="3.90 A"/>
    <property type="chains" value="E/F=1-684"/>
</dbReference>
<dbReference type="PDB" id="8W9E">
    <property type="method" value="EM"/>
    <property type="resolution" value="3.60 A"/>
    <property type="chains" value="E/F=1-684"/>
</dbReference>
<dbReference type="PDB" id="8W9F">
    <property type="method" value="EM"/>
    <property type="resolution" value="4.40 A"/>
    <property type="chains" value="E/F=1-684"/>
</dbReference>
<dbReference type="PDBsum" id="7YI0"/>
<dbReference type="PDBsum" id="7YI2"/>
<dbReference type="PDBsum" id="7YI3"/>
<dbReference type="PDBsum" id="7YI4"/>
<dbReference type="PDBsum" id="7YI5"/>
<dbReference type="PDBsum" id="8HXX"/>
<dbReference type="PDBsum" id="8HXY"/>
<dbReference type="PDBsum" id="8HY0"/>
<dbReference type="PDBsum" id="8I3F"/>
<dbReference type="PDBsum" id="8IHM"/>
<dbReference type="PDBsum" id="8IHN"/>
<dbReference type="PDBsum" id="8IHT"/>
<dbReference type="PDBsum" id="8JHO"/>
<dbReference type="PDBsum" id="8KC7"/>
<dbReference type="PDBsum" id="8KD2"/>
<dbReference type="PDBsum" id="8KD3"/>
<dbReference type="PDBsum" id="8KD4"/>
<dbReference type="PDBsum" id="8KD5"/>
<dbReference type="PDBsum" id="8KD6"/>
<dbReference type="PDBsum" id="8KD7"/>
<dbReference type="PDBsum" id="8TOF"/>
<dbReference type="PDBsum" id="8W9C"/>
<dbReference type="PDBsum" id="8W9D"/>
<dbReference type="PDBsum" id="8W9E"/>
<dbReference type="PDBsum" id="8W9F"/>
<dbReference type="EMDB" id="EMD-33845"/>
<dbReference type="EMDB" id="EMD-33849"/>
<dbReference type="EMDB" id="EMD-33850"/>
<dbReference type="EMDB" id="EMD-33851"/>
<dbReference type="EMDB" id="EMD-33852"/>
<dbReference type="EMDB" id="EMD-37096"/>
<dbReference type="EMDB" id="EMD-37122"/>
<dbReference type="EMDB" id="EMD-37123"/>
<dbReference type="EMDB" id="EMD-37124"/>
<dbReference type="EMDB" id="EMD-37125"/>
<dbReference type="EMDB" id="EMD-37126"/>
<dbReference type="EMDB" id="EMD-37127"/>
<dbReference type="EMDB" id="EMD-37364"/>
<dbReference type="EMDB" id="EMD-37365"/>
<dbReference type="EMDB" id="EMD-37366"/>
<dbReference type="EMDB" id="EMD-37367"/>
<dbReference type="EMDB" id="EMD-41449"/>
<dbReference type="SMR" id="Q04779"/>
<dbReference type="BioGRID" id="35250">
    <property type="interactions" value="434"/>
</dbReference>
<dbReference type="ComplexPortal" id="CPX-1851">
    <property type="entry name" value="RPD3S histone deacetylase complex"/>
</dbReference>
<dbReference type="DIP" id="DIP-1959N"/>
<dbReference type="FunCoup" id="Q04779">
    <property type="interactions" value="304"/>
</dbReference>
<dbReference type="IntAct" id="Q04779">
    <property type="interactions" value="51"/>
</dbReference>
<dbReference type="MINT" id="Q04779"/>
<dbReference type="STRING" id="4932.YMR075W"/>
<dbReference type="GlyGen" id="Q04779">
    <property type="glycosylation" value="3 sites, 1 O-linked glycan (3 sites)"/>
</dbReference>
<dbReference type="iPTMnet" id="Q04779"/>
<dbReference type="PaxDb" id="4932-YMR075W"/>
<dbReference type="PeptideAtlas" id="Q04779"/>
<dbReference type="EnsemblFungi" id="YMR075W_mRNA">
    <property type="protein sequence ID" value="YMR075W"/>
    <property type="gene ID" value="YMR075W"/>
</dbReference>
<dbReference type="GeneID" id="855097"/>
<dbReference type="KEGG" id="sce:YMR075W"/>
<dbReference type="AGR" id="SGD:S000004680"/>
<dbReference type="SGD" id="S000004680">
    <property type="gene designation" value="RCO1"/>
</dbReference>
<dbReference type="VEuPathDB" id="FungiDB:YMR075W"/>
<dbReference type="eggNOG" id="KOG4299">
    <property type="taxonomic scope" value="Eukaryota"/>
</dbReference>
<dbReference type="GeneTree" id="ENSGT00990000209321"/>
<dbReference type="HOGENOM" id="CLU_016350_0_0_1"/>
<dbReference type="InParanoid" id="Q04779"/>
<dbReference type="OMA" id="CCDPPIE"/>
<dbReference type="OrthoDB" id="5876363at2759"/>
<dbReference type="BioCyc" id="YEAST:G3O-32777-MONOMER"/>
<dbReference type="BioGRID-ORCS" id="855097">
    <property type="hits" value="0 hits in 10 CRISPR screens"/>
</dbReference>
<dbReference type="PRO" id="PR:Q04779"/>
<dbReference type="Proteomes" id="UP000002311">
    <property type="component" value="Chromosome XIII"/>
</dbReference>
<dbReference type="RNAct" id="Q04779">
    <property type="molecule type" value="protein"/>
</dbReference>
<dbReference type="GO" id="GO:0000118">
    <property type="term" value="C:histone deacetylase complex"/>
    <property type="evidence" value="ECO:0000314"/>
    <property type="project" value="SGD"/>
</dbReference>
<dbReference type="GO" id="GO:0005634">
    <property type="term" value="C:nucleus"/>
    <property type="evidence" value="ECO:0007005"/>
    <property type="project" value="SGD"/>
</dbReference>
<dbReference type="GO" id="GO:0032221">
    <property type="term" value="C:Rpd3S complex"/>
    <property type="evidence" value="ECO:0000314"/>
    <property type="project" value="SGD"/>
</dbReference>
<dbReference type="GO" id="GO:0008270">
    <property type="term" value="F:zinc ion binding"/>
    <property type="evidence" value="ECO:0007669"/>
    <property type="project" value="UniProtKB-KW"/>
</dbReference>
<dbReference type="GO" id="GO:0060195">
    <property type="term" value="P:negative regulation of antisense RNA transcription"/>
    <property type="evidence" value="ECO:0000315"/>
    <property type="project" value="SGD"/>
</dbReference>
<dbReference type="GO" id="GO:0000122">
    <property type="term" value="P:negative regulation of transcription by RNA polymerase II"/>
    <property type="evidence" value="ECO:0000303"/>
    <property type="project" value="ComplexPortal"/>
</dbReference>
<dbReference type="GO" id="GO:0006334">
    <property type="term" value="P:nucleosome assembly"/>
    <property type="evidence" value="ECO:0000303"/>
    <property type="project" value="ComplexPortal"/>
</dbReference>
<dbReference type="GO" id="GO:0045944">
    <property type="term" value="P:positive regulation of transcription by RNA polymerase II"/>
    <property type="evidence" value="ECO:0000315"/>
    <property type="project" value="SGD"/>
</dbReference>
<dbReference type="GO" id="GO:0030174">
    <property type="term" value="P:regulation of DNA-templated DNA replication initiation"/>
    <property type="evidence" value="ECO:0000315"/>
    <property type="project" value="SGD"/>
</dbReference>
<dbReference type="GO" id="GO:0006357">
    <property type="term" value="P:regulation of transcription by RNA polymerase II"/>
    <property type="evidence" value="ECO:0000318"/>
    <property type="project" value="GO_Central"/>
</dbReference>
<dbReference type="GO" id="GO:0006368">
    <property type="term" value="P:transcription elongation by RNA polymerase II"/>
    <property type="evidence" value="ECO:0000316"/>
    <property type="project" value="SGD"/>
</dbReference>
<dbReference type="CDD" id="cd15535">
    <property type="entry name" value="PHD1_Rco1"/>
    <property type="match status" value="1"/>
</dbReference>
<dbReference type="CDD" id="cd15534">
    <property type="entry name" value="PHD2_PHF12_Rco1"/>
    <property type="match status" value="1"/>
</dbReference>
<dbReference type="FunFam" id="3.30.40.10:FF:000661">
    <property type="entry name" value="Rco1p"/>
    <property type="match status" value="1"/>
</dbReference>
<dbReference type="FunFam" id="3.30.40.10:FF:000687">
    <property type="entry name" value="Rco1p"/>
    <property type="match status" value="1"/>
</dbReference>
<dbReference type="Gene3D" id="3.30.40.10">
    <property type="entry name" value="Zinc/RING finger domain, C3HC4 (zinc finger)"/>
    <property type="match status" value="2"/>
</dbReference>
<dbReference type="InterPro" id="IPR052819">
    <property type="entry name" value="Chromatin_regulatory_protein"/>
</dbReference>
<dbReference type="InterPro" id="IPR019786">
    <property type="entry name" value="Zinc_finger_PHD-type_CS"/>
</dbReference>
<dbReference type="InterPro" id="IPR011011">
    <property type="entry name" value="Znf_FYVE_PHD"/>
</dbReference>
<dbReference type="InterPro" id="IPR001965">
    <property type="entry name" value="Znf_PHD"/>
</dbReference>
<dbReference type="InterPro" id="IPR019787">
    <property type="entry name" value="Znf_PHD-finger"/>
</dbReference>
<dbReference type="InterPro" id="IPR013083">
    <property type="entry name" value="Znf_RING/FYVE/PHD"/>
</dbReference>
<dbReference type="PANTHER" id="PTHR47636">
    <property type="entry name" value="TRANSCRIPTIONAL REGULATORY PROTEIN RCO1"/>
    <property type="match status" value="1"/>
</dbReference>
<dbReference type="PANTHER" id="PTHR47636:SF1">
    <property type="entry name" value="TRANSCRIPTIONAL REGULATORY PROTEIN RCO1"/>
    <property type="match status" value="1"/>
</dbReference>
<dbReference type="Pfam" id="PF00628">
    <property type="entry name" value="PHD"/>
    <property type="match status" value="1"/>
</dbReference>
<dbReference type="SMART" id="SM00249">
    <property type="entry name" value="PHD"/>
    <property type="match status" value="2"/>
</dbReference>
<dbReference type="SUPFAM" id="SSF57903">
    <property type="entry name" value="FYVE/PHD zinc finger"/>
    <property type="match status" value="2"/>
</dbReference>
<dbReference type="PROSITE" id="PS01359">
    <property type="entry name" value="ZF_PHD_1"/>
    <property type="match status" value="1"/>
</dbReference>
<dbReference type="PROSITE" id="PS50016">
    <property type="entry name" value="ZF_PHD_2"/>
    <property type="match status" value="1"/>
</dbReference>
<organism>
    <name type="scientific">Saccharomyces cerevisiae (strain ATCC 204508 / S288c)</name>
    <name type="common">Baker's yeast</name>
    <dbReference type="NCBI Taxonomy" id="559292"/>
    <lineage>
        <taxon>Eukaryota</taxon>
        <taxon>Fungi</taxon>
        <taxon>Dikarya</taxon>
        <taxon>Ascomycota</taxon>
        <taxon>Saccharomycotina</taxon>
        <taxon>Saccharomycetes</taxon>
        <taxon>Saccharomycetales</taxon>
        <taxon>Saccharomycetaceae</taxon>
        <taxon>Saccharomyces</taxon>
    </lineage>
</organism>
<evidence type="ECO:0000255" key="1">
    <source>
        <dbReference type="PROSITE-ProRule" id="PRU00146"/>
    </source>
</evidence>
<evidence type="ECO:0000256" key="2">
    <source>
        <dbReference type="SAM" id="MobiDB-lite"/>
    </source>
</evidence>
<evidence type="ECO:0000269" key="3">
    <source>
    </source>
</evidence>
<evidence type="ECO:0000269" key="4">
    <source>
    </source>
</evidence>
<evidence type="ECO:0000269" key="5">
    <source>
    </source>
</evidence>
<evidence type="ECO:0007744" key="6">
    <source>
    </source>
</evidence>
<evidence type="ECO:0007744" key="7">
    <source>
    </source>
</evidence>
<evidence type="ECO:0007744" key="8">
    <source>
    </source>
</evidence>
<evidence type="ECO:0007829" key="9">
    <source>
        <dbReference type="PDB" id="7YI0"/>
    </source>
</evidence>
<evidence type="ECO:0007829" key="10">
    <source>
        <dbReference type="PDB" id="7YI3"/>
    </source>
</evidence>
<evidence type="ECO:0007829" key="11">
    <source>
        <dbReference type="PDB" id="8HXX"/>
    </source>
</evidence>
<evidence type="ECO:0007829" key="12">
    <source>
        <dbReference type="PDB" id="8I3F"/>
    </source>
</evidence>
<evidence type="ECO:0007829" key="13">
    <source>
        <dbReference type="PDB" id="8KC7"/>
    </source>
</evidence>
<evidence type="ECO:0007829" key="14">
    <source>
        <dbReference type="PDB" id="8KD2"/>
    </source>
</evidence>
<evidence type="ECO:0007829" key="15">
    <source>
        <dbReference type="PDB" id="8KD6"/>
    </source>
</evidence>
<evidence type="ECO:0007829" key="16">
    <source>
        <dbReference type="PDB" id="8KD7"/>
    </source>
</evidence>
<evidence type="ECO:0007829" key="17">
    <source>
        <dbReference type="PDB" id="8TOF"/>
    </source>
</evidence>
<feature type="chain" id="PRO_0000203282" description="Transcriptional regulatory protein RCO1">
    <location>
        <begin position="1"/>
        <end position="684"/>
    </location>
</feature>
<feature type="zinc finger region" description="PHD-type 1" evidence="1">
    <location>
        <begin position="260"/>
        <end position="309"/>
    </location>
</feature>
<feature type="zinc finger region" description="PHD-type 2; atypical" evidence="1">
    <location>
        <begin position="414"/>
        <end position="472"/>
    </location>
</feature>
<feature type="region of interest" description="Disordered" evidence="2">
    <location>
        <begin position="1"/>
        <end position="48"/>
    </location>
</feature>
<feature type="compositionally biased region" description="Low complexity" evidence="2">
    <location>
        <begin position="10"/>
        <end position="29"/>
    </location>
</feature>
<feature type="modified residue" description="N-acetylmethionine" evidence="8">
    <location>
        <position position="1"/>
    </location>
</feature>
<feature type="modified residue" description="Phosphoserine" evidence="6">
    <location>
        <position position="68"/>
    </location>
</feature>
<feature type="modified residue" description="Phosphoserine" evidence="6 7">
    <location>
        <position position="683"/>
    </location>
</feature>
<feature type="turn" evidence="14">
    <location>
        <begin position="36"/>
        <end position="38"/>
    </location>
</feature>
<feature type="strand" evidence="16">
    <location>
        <begin position="43"/>
        <end position="45"/>
    </location>
</feature>
<feature type="strand" evidence="14">
    <location>
        <begin position="47"/>
        <end position="49"/>
    </location>
</feature>
<feature type="helix" evidence="15">
    <location>
        <begin position="52"/>
        <end position="54"/>
    </location>
</feature>
<feature type="turn" evidence="15">
    <location>
        <begin position="55"/>
        <end position="57"/>
    </location>
</feature>
<feature type="strand" evidence="11">
    <location>
        <begin position="85"/>
        <end position="87"/>
    </location>
</feature>
<feature type="strand" evidence="17">
    <location>
        <begin position="89"/>
        <end position="91"/>
    </location>
</feature>
<feature type="strand" evidence="11">
    <location>
        <begin position="93"/>
        <end position="96"/>
    </location>
</feature>
<feature type="strand" evidence="17">
    <location>
        <begin position="102"/>
        <end position="106"/>
    </location>
</feature>
<feature type="strand" evidence="17">
    <location>
        <begin position="110"/>
        <end position="113"/>
    </location>
</feature>
<feature type="strand" evidence="10">
    <location>
        <begin position="115"/>
        <end position="117"/>
    </location>
</feature>
<feature type="helix" evidence="17">
    <location>
        <begin position="121"/>
        <end position="127"/>
    </location>
</feature>
<feature type="helix" evidence="17">
    <location>
        <begin position="164"/>
        <end position="166"/>
    </location>
</feature>
<feature type="turn" evidence="17">
    <location>
        <begin position="171"/>
        <end position="175"/>
    </location>
</feature>
<feature type="strand" evidence="17">
    <location>
        <begin position="176"/>
        <end position="179"/>
    </location>
</feature>
<feature type="turn" evidence="9">
    <location>
        <begin position="183"/>
        <end position="186"/>
    </location>
</feature>
<feature type="strand" evidence="12">
    <location>
        <begin position="261"/>
        <end position="263"/>
    </location>
</feature>
<feature type="turn" evidence="12">
    <location>
        <begin position="264"/>
        <end position="266"/>
    </location>
</feature>
<feature type="strand" evidence="12">
    <location>
        <begin position="270"/>
        <end position="274"/>
    </location>
</feature>
<feature type="strand" evidence="12">
    <location>
        <begin position="276"/>
        <end position="279"/>
    </location>
</feature>
<feature type="strand" evidence="12">
    <location>
        <begin position="281"/>
        <end position="283"/>
    </location>
</feature>
<feature type="helix" evidence="12">
    <location>
        <begin position="284"/>
        <end position="286"/>
    </location>
</feature>
<feature type="strand" evidence="12">
    <location>
        <begin position="287"/>
        <end position="289"/>
    </location>
</feature>
<feature type="helix" evidence="17">
    <location>
        <begin position="293"/>
        <end position="295"/>
    </location>
</feature>
<feature type="helix" evidence="12">
    <location>
        <begin position="304"/>
        <end position="313"/>
    </location>
</feature>
<feature type="strand" evidence="11">
    <location>
        <begin position="315"/>
        <end position="317"/>
    </location>
</feature>
<feature type="helix" evidence="12">
    <location>
        <begin position="319"/>
        <end position="329"/>
    </location>
</feature>
<feature type="helix" evidence="12">
    <location>
        <begin position="330"/>
        <end position="336"/>
    </location>
</feature>
<feature type="helix" evidence="12">
    <location>
        <begin position="337"/>
        <end position="342"/>
    </location>
</feature>
<feature type="helix" evidence="12">
    <location>
        <begin position="343"/>
        <end position="345"/>
    </location>
</feature>
<feature type="helix" evidence="12">
    <location>
        <begin position="355"/>
        <end position="358"/>
    </location>
</feature>
<feature type="strand" evidence="13">
    <location>
        <begin position="361"/>
        <end position="363"/>
    </location>
</feature>
<feature type="strand" evidence="10">
    <location>
        <begin position="364"/>
        <end position="366"/>
    </location>
</feature>
<feature type="strand" evidence="14">
    <location>
        <begin position="368"/>
        <end position="370"/>
    </location>
</feature>
<feature type="strand" evidence="10">
    <location>
        <begin position="372"/>
        <end position="374"/>
    </location>
</feature>
<feature type="strand" evidence="11">
    <location>
        <begin position="375"/>
        <end position="377"/>
    </location>
</feature>
<feature type="helix" evidence="17">
    <location>
        <begin position="383"/>
        <end position="386"/>
    </location>
</feature>
<feature type="helix" evidence="17">
    <location>
        <begin position="394"/>
        <end position="396"/>
    </location>
</feature>
<feature type="helix" evidence="14">
    <location>
        <begin position="401"/>
        <end position="406"/>
    </location>
</feature>
<feature type="turn" evidence="17">
    <location>
        <begin position="409"/>
        <end position="411"/>
    </location>
</feature>
<feature type="turn" evidence="17">
    <location>
        <begin position="418"/>
        <end position="420"/>
    </location>
</feature>
<feature type="strand" evidence="11">
    <location>
        <begin position="428"/>
        <end position="430"/>
    </location>
</feature>
<feature type="helix" evidence="17">
    <location>
        <begin position="431"/>
        <end position="433"/>
    </location>
</feature>
<feature type="strand" evidence="17">
    <location>
        <begin position="437"/>
        <end position="439"/>
    </location>
</feature>
<feature type="strand" evidence="17">
    <location>
        <begin position="441"/>
        <end position="443"/>
    </location>
</feature>
<feature type="strand" evidence="17">
    <location>
        <begin position="446"/>
        <end position="448"/>
    </location>
</feature>
<feature type="turn" evidence="17">
    <location>
        <begin position="449"/>
        <end position="453"/>
    </location>
</feature>
<feature type="strand" evidence="17">
    <location>
        <begin position="460"/>
        <end position="462"/>
    </location>
</feature>
<feature type="strand" evidence="14">
    <location>
        <begin position="467"/>
        <end position="469"/>
    </location>
</feature>
<feature type="strand" evidence="11">
    <location>
        <begin position="472"/>
        <end position="477"/>
    </location>
</feature>
<feature type="strand" evidence="11">
    <location>
        <begin position="489"/>
        <end position="493"/>
    </location>
</feature>
<feature type="turn" evidence="11">
    <location>
        <begin position="500"/>
        <end position="502"/>
    </location>
</feature>
<feature type="strand" evidence="15">
    <location>
        <begin position="511"/>
        <end position="513"/>
    </location>
</feature>
<feature type="strand" evidence="11">
    <location>
        <begin position="520"/>
        <end position="522"/>
    </location>
</feature>
<feature type="helix" evidence="11">
    <location>
        <begin position="534"/>
        <end position="537"/>
    </location>
</feature>
<feature type="strand" evidence="11">
    <location>
        <begin position="539"/>
        <end position="542"/>
    </location>
</feature>
<feature type="helix" evidence="17">
    <location>
        <begin position="545"/>
        <end position="564"/>
    </location>
</feature>